<feature type="chain" id="PRO_0000258531" description="UPF0181 protein YoaH">
    <location>
        <begin position="1"/>
        <end position="59"/>
    </location>
</feature>
<gene>
    <name evidence="1" type="primary">yoaH</name>
    <name type="ordered locus">ECP_1754</name>
</gene>
<name>YOAH_ECOL5</name>
<protein>
    <recommendedName>
        <fullName evidence="1">UPF0181 protein YoaH</fullName>
    </recommendedName>
</protein>
<reference key="1">
    <citation type="journal article" date="2006" name="Mol. Microbiol.">
        <title>Role of pathogenicity island-associated integrases in the genome plasticity of uropathogenic Escherichia coli strain 536.</title>
        <authorList>
            <person name="Hochhut B."/>
            <person name="Wilde C."/>
            <person name="Balling G."/>
            <person name="Middendorf B."/>
            <person name="Dobrindt U."/>
            <person name="Brzuszkiewicz E."/>
            <person name="Gottschalk G."/>
            <person name="Carniel E."/>
            <person name="Hacker J."/>
        </authorList>
    </citation>
    <scope>NUCLEOTIDE SEQUENCE [LARGE SCALE GENOMIC DNA]</scope>
    <source>
        <strain>536 / UPEC</strain>
    </source>
</reference>
<sequence>MFAGLPSLTHEQQQKAVERIQELMAQGMSSGQAIALVAEELRANHSGERIVARFEDEDE</sequence>
<proteinExistence type="inferred from homology"/>
<comment type="similarity">
    <text evidence="1">Belongs to the UPF0181 family.</text>
</comment>
<accession>Q0TH22</accession>
<organism>
    <name type="scientific">Escherichia coli O6:K15:H31 (strain 536 / UPEC)</name>
    <dbReference type="NCBI Taxonomy" id="362663"/>
    <lineage>
        <taxon>Bacteria</taxon>
        <taxon>Pseudomonadati</taxon>
        <taxon>Pseudomonadota</taxon>
        <taxon>Gammaproteobacteria</taxon>
        <taxon>Enterobacterales</taxon>
        <taxon>Enterobacteriaceae</taxon>
        <taxon>Escherichia</taxon>
    </lineage>
</organism>
<evidence type="ECO:0000255" key="1">
    <source>
        <dbReference type="HAMAP-Rule" id="MF_00507"/>
    </source>
</evidence>
<dbReference type="EMBL" id="CP000247">
    <property type="protein sequence ID" value="ABG69757.1"/>
    <property type="molecule type" value="Genomic_DNA"/>
</dbReference>
<dbReference type="RefSeq" id="WP_000457334.1">
    <property type="nucleotide sequence ID" value="NC_008253.1"/>
</dbReference>
<dbReference type="SMR" id="Q0TH22"/>
<dbReference type="KEGG" id="ecp:ECP_1754"/>
<dbReference type="HOGENOM" id="CLU_185263_0_0_6"/>
<dbReference type="Proteomes" id="UP000009182">
    <property type="component" value="Chromosome"/>
</dbReference>
<dbReference type="HAMAP" id="MF_00507">
    <property type="entry name" value="UPF0181"/>
    <property type="match status" value="1"/>
</dbReference>
<dbReference type="InterPro" id="IPR005371">
    <property type="entry name" value="UPF0181"/>
</dbReference>
<dbReference type="NCBIfam" id="NF003476">
    <property type="entry name" value="PRK05114.1"/>
    <property type="match status" value="1"/>
</dbReference>
<dbReference type="Pfam" id="PF03701">
    <property type="entry name" value="UPF0181"/>
    <property type="match status" value="1"/>
</dbReference>